<proteinExistence type="evidence at transcript level"/>
<name>LEC3_CAEEL</name>
<keyword id="KW-0430">Lectin</keyword>
<keyword id="KW-1185">Reference proteome</keyword>
<keyword id="KW-0677">Repeat</keyword>
<evidence type="ECO:0000250" key="1"/>
<evidence type="ECO:0000255" key="2">
    <source>
        <dbReference type="PROSITE-ProRule" id="PRU00639"/>
    </source>
</evidence>
<feature type="chain" id="PRO_0000076958" description="32 kDa beta-galactoside-binding lectin lec-3">
    <location>
        <begin position="1"/>
        <end position="297"/>
    </location>
</feature>
<feature type="domain" description="Galectin 1" evidence="2">
    <location>
        <begin position="11"/>
        <end position="142"/>
    </location>
</feature>
<feature type="domain" description="Galectin 2" evidence="2">
    <location>
        <begin position="151"/>
        <end position="290"/>
    </location>
</feature>
<feature type="binding site" evidence="1">
    <location>
        <begin position="224"/>
        <end position="230"/>
    </location>
    <ligand>
        <name>a beta-D-galactoside</name>
        <dbReference type="ChEBI" id="CHEBI:28034"/>
    </ligand>
</feature>
<protein>
    <recommendedName>
        <fullName>32 kDa beta-galactoside-binding lectin lec-3</fullName>
    </recommendedName>
    <alternativeName>
        <fullName>32 kDa GBP</fullName>
    </alternativeName>
</protein>
<organism>
    <name type="scientific">Caenorhabditis elegans</name>
    <dbReference type="NCBI Taxonomy" id="6239"/>
    <lineage>
        <taxon>Eukaryota</taxon>
        <taxon>Metazoa</taxon>
        <taxon>Ecdysozoa</taxon>
        <taxon>Nematoda</taxon>
        <taxon>Chromadorea</taxon>
        <taxon>Rhabditida</taxon>
        <taxon>Rhabditina</taxon>
        <taxon>Rhabditomorpha</taxon>
        <taxon>Rhabditoidea</taxon>
        <taxon>Rhabditidae</taxon>
        <taxon>Peloderinae</taxon>
        <taxon>Caenorhabditis</taxon>
    </lineage>
</organism>
<dbReference type="EMBL" id="AB038504">
    <property type="protein sequence ID" value="BAB11969.1"/>
    <property type="molecule type" value="mRNA"/>
</dbReference>
<dbReference type="EMBL" id="Z48638">
    <property type="protein sequence ID" value="CAA88570.2"/>
    <property type="molecule type" value="Genomic_DNA"/>
</dbReference>
<dbReference type="PIR" id="T28073">
    <property type="entry name" value="T28073"/>
</dbReference>
<dbReference type="RefSeq" id="NP_496159.1">
    <property type="nucleotide sequence ID" value="NM_063758.9"/>
</dbReference>
<dbReference type="SMR" id="Q09581"/>
<dbReference type="BioGRID" id="39877">
    <property type="interactions" value="13"/>
</dbReference>
<dbReference type="DIP" id="DIP-26079N"/>
<dbReference type="FunCoup" id="Q09581">
    <property type="interactions" value="151"/>
</dbReference>
<dbReference type="STRING" id="6239.ZK892.1f.1"/>
<dbReference type="PaxDb" id="6239-ZK892.1f"/>
<dbReference type="EnsemblMetazoa" id="ZK892.1a.1">
    <property type="protein sequence ID" value="ZK892.1a.1"/>
    <property type="gene ID" value="WBGene00002266"/>
</dbReference>
<dbReference type="EnsemblMetazoa" id="ZK892.1a.2">
    <property type="protein sequence ID" value="ZK892.1a.2"/>
    <property type="gene ID" value="WBGene00002266"/>
</dbReference>
<dbReference type="GeneID" id="174557"/>
<dbReference type="KEGG" id="cel:CELE_ZK892.1"/>
<dbReference type="UCSC" id="ZK892.1a">
    <property type="organism name" value="c. elegans"/>
</dbReference>
<dbReference type="AGR" id="WB:WBGene00002266"/>
<dbReference type="CTD" id="174557"/>
<dbReference type="WormBase" id="ZK892.1a">
    <property type="protein sequence ID" value="CE24743"/>
    <property type="gene ID" value="WBGene00002266"/>
    <property type="gene designation" value="lec-3"/>
</dbReference>
<dbReference type="eggNOG" id="KOG3587">
    <property type="taxonomic scope" value="Eukaryota"/>
</dbReference>
<dbReference type="InParanoid" id="Q09581"/>
<dbReference type="OrthoDB" id="6251307at2759"/>
<dbReference type="Reactome" id="R-CEL-6798695">
    <property type="pathway name" value="Neutrophil degranulation"/>
</dbReference>
<dbReference type="PRO" id="PR:Q09581"/>
<dbReference type="Proteomes" id="UP000001940">
    <property type="component" value="Chromosome II"/>
</dbReference>
<dbReference type="Bgee" id="WBGene00002266">
    <property type="expression patterns" value="Expressed in pharyngeal muscle cell (C elegans) and 3 other cell types or tissues"/>
</dbReference>
<dbReference type="ExpressionAtlas" id="Q09581">
    <property type="expression patterns" value="baseline and differential"/>
</dbReference>
<dbReference type="GO" id="GO:0005886">
    <property type="term" value="C:plasma membrane"/>
    <property type="evidence" value="ECO:0007005"/>
    <property type="project" value="WormBase"/>
</dbReference>
<dbReference type="GO" id="GO:0030246">
    <property type="term" value="F:carbohydrate binding"/>
    <property type="evidence" value="ECO:0000318"/>
    <property type="project" value="GO_Central"/>
</dbReference>
<dbReference type="GO" id="GO:0016936">
    <property type="term" value="F:galactoside binding"/>
    <property type="evidence" value="ECO:0000318"/>
    <property type="project" value="GO_Central"/>
</dbReference>
<dbReference type="CDD" id="cd00070">
    <property type="entry name" value="GLECT"/>
    <property type="match status" value="2"/>
</dbReference>
<dbReference type="FunFam" id="2.60.120.200:FF:000145">
    <property type="entry name" value="Galectin"/>
    <property type="match status" value="1"/>
</dbReference>
<dbReference type="FunFam" id="2.60.120.200:FF:000155">
    <property type="entry name" value="Galectin"/>
    <property type="match status" value="1"/>
</dbReference>
<dbReference type="Gene3D" id="2.60.120.200">
    <property type="match status" value="2"/>
</dbReference>
<dbReference type="InterPro" id="IPR013320">
    <property type="entry name" value="ConA-like_dom_sf"/>
</dbReference>
<dbReference type="InterPro" id="IPR044156">
    <property type="entry name" value="Galectin-like"/>
</dbReference>
<dbReference type="InterPro" id="IPR001079">
    <property type="entry name" value="Galectin_CRD"/>
</dbReference>
<dbReference type="PANTHER" id="PTHR11346:SF176">
    <property type="entry name" value="32 KDA BETA-GALACTOSIDE-BINDING LECTIN LEC-3"/>
    <property type="match status" value="1"/>
</dbReference>
<dbReference type="PANTHER" id="PTHR11346">
    <property type="entry name" value="GALECTIN"/>
    <property type="match status" value="1"/>
</dbReference>
<dbReference type="Pfam" id="PF00337">
    <property type="entry name" value="Gal-bind_lectin"/>
    <property type="match status" value="2"/>
</dbReference>
<dbReference type="SMART" id="SM00908">
    <property type="entry name" value="Gal-bind_lectin"/>
    <property type="match status" value="2"/>
</dbReference>
<dbReference type="SMART" id="SM00276">
    <property type="entry name" value="GLECT"/>
    <property type="match status" value="2"/>
</dbReference>
<dbReference type="SUPFAM" id="SSF49899">
    <property type="entry name" value="Concanavalin A-like lectins/glucanases"/>
    <property type="match status" value="2"/>
</dbReference>
<dbReference type="PROSITE" id="PS51304">
    <property type="entry name" value="GALECTIN"/>
    <property type="match status" value="2"/>
</dbReference>
<reference key="1">
    <citation type="submission" date="2000-02" db="EMBL/GenBank/DDBJ databases">
        <title>Novel galectins found in C. elegans.</title>
        <authorList>
            <person name="Hirabayashi J."/>
            <person name="Hayama K."/>
            <person name="Kasai K."/>
        </authorList>
    </citation>
    <scope>NUCLEOTIDE SEQUENCE [MRNA]</scope>
</reference>
<reference key="2">
    <citation type="journal article" date="1998" name="Science">
        <title>Genome sequence of the nematode C. elegans: a platform for investigating biology.</title>
        <authorList>
            <consortium name="The C. elegans sequencing consortium"/>
        </authorList>
    </citation>
    <scope>NUCLEOTIDE SEQUENCE [LARGE SCALE GENOMIC DNA]</scope>
    <source>
        <strain>Bristol N2</strain>
    </source>
</reference>
<comment type="function">
    <text evidence="1">Binds galactose.</text>
</comment>
<sequence>MAEPKSFNIPYRSKLTERIEPGQTLIIRGKTIDESKRFNINLHKDSPDFSGNDVPLHLSIRFDEGKIVYNAYTKGTWGKEERAKNPIKKGDDFDIRIRAHDSKFQVSINHKEVKNFEHRIPLNSVSHLSIDGDVVLNHVQWGGKYYPVPYESGIAADGLVPGKTLVVYGTPEKKAKKFNINLLKKNGDIALHFNPRFDEKANGFMCAKPTPGSVVRNSLVNGEWGNEEREGKNPFERLTAFDLEIRNEEFAFQIFVNGERFASYAHRVDPHDIAGLQIQGDIELTGIQVVNNQPAQE</sequence>
<accession>Q09581</accession>
<accession>Q9GNP6</accession>
<gene>
    <name type="primary">lec-3</name>
    <name type="ORF">ZK892.1</name>
</gene>